<feature type="signal peptide" evidence="5">
    <location>
        <begin position="1"/>
        <end position="18"/>
    </location>
</feature>
<feature type="chain" id="PRO_5004292794" description="AA13 family lytic polysaccharide monooxygenase NCU08746">
    <location>
        <begin position="19"/>
        <end position="385"/>
    </location>
</feature>
<feature type="domain" description="Chitin-binding type-4" evidence="2">
    <location>
        <begin position="19"/>
        <end position="248"/>
    </location>
</feature>
<feature type="domain" description="CBM20" evidence="4">
    <location>
        <begin position="278"/>
        <end position="385"/>
    </location>
</feature>
<feature type="binding site" evidence="1">
    <location>
        <position position="19"/>
    </location>
    <ligand>
        <name>Cu(2+)</name>
        <dbReference type="ChEBI" id="CHEBI:29036"/>
        <note>catalytic</note>
    </ligand>
</feature>
<feature type="binding site" evidence="1">
    <location>
        <position position="109"/>
    </location>
    <ligand>
        <name>Cu(2+)</name>
        <dbReference type="ChEBI" id="CHEBI:29036"/>
        <note>catalytic</note>
    </ligand>
</feature>
<feature type="binding site" evidence="1">
    <location>
        <position position="242"/>
    </location>
    <ligand>
        <name>Cu(2+)</name>
        <dbReference type="ChEBI" id="CHEBI:29036"/>
        <note>catalytic</note>
    </ligand>
</feature>
<feature type="modified residue" description="Methylhistidine" evidence="5">
    <location>
        <position position="19"/>
    </location>
</feature>
<feature type="glycosylation site" description="N-linked (GlcNAc...) asparagine" evidence="3">
    <location>
        <position position="54"/>
    </location>
</feature>
<feature type="glycosylation site" description="N-linked (GlcNAc...) asparagine" evidence="3">
    <location>
        <position position="365"/>
    </location>
</feature>
<feature type="disulfide bond" evidence="1">
    <location>
        <begin position="40"/>
        <end position="43"/>
    </location>
</feature>
<feature type="disulfide bond" evidence="1">
    <location>
        <begin position="66"/>
        <end position="245"/>
    </location>
</feature>
<feature type="disulfide bond" evidence="1">
    <location>
        <begin position="102"/>
        <end position="203"/>
    </location>
</feature>
<feature type="disulfide bond" evidence="1">
    <location>
        <begin position="118"/>
        <end position="145"/>
    </location>
</feature>
<feature type="disulfide bond" evidence="1">
    <location>
        <begin position="153"/>
        <end position="161"/>
    </location>
</feature>
<feature type="disulfide bond" evidence="1">
    <location>
        <begin position="167"/>
        <end position="173"/>
    </location>
</feature>
<feature type="disulfide bond" evidence="1">
    <location>
        <begin position="181"/>
        <end position="192"/>
    </location>
</feature>
<protein>
    <recommendedName>
        <fullName evidence="6">AA13 family lytic polysaccharide monooxygenase NCU08746</fullName>
        <shortName evidence="6">LPMO13 NCU08746</shortName>
        <ecNumber evidence="5">1.14.99.55</ecNumber>
    </recommendedName>
</protein>
<organism>
    <name type="scientific">Neurospora crassa (strain ATCC 24698 / 74-OR23-1A / CBS 708.71 / DSM 1257 / FGSC 987)</name>
    <dbReference type="NCBI Taxonomy" id="367110"/>
    <lineage>
        <taxon>Eukaryota</taxon>
        <taxon>Fungi</taxon>
        <taxon>Dikarya</taxon>
        <taxon>Ascomycota</taxon>
        <taxon>Pezizomycotina</taxon>
        <taxon>Sordariomycetes</taxon>
        <taxon>Sordariomycetidae</taxon>
        <taxon>Sordariales</taxon>
        <taxon>Sordariaceae</taxon>
        <taxon>Neurospora</taxon>
    </lineage>
</organism>
<dbReference type="EC" id="1.14.99.55" evidence="5"/>
<dbReference type="EMBL" id="CM002237">
    <property type="protein sequence ID" value="EAA34371.2"/>
    <property type="molecule type" value="Genomic_DNA"/>
</dbReference>
<dbReference type="RefSeq" id="XP_963607.2">
    <property type="nucleotide sequence ID" value="XM_958514.2"/>
</dbReference>
<dbReference type="SMR" id="Q7SCE9"/>
<dbReference type="STRING" id="367110.Q7SCE9"/>
<dbReference type="CAZy" id="AA13">
    <property type="family name" value="Auxiliary Activities 13"/>
</dbReference>
<dbReference type="CAZy" id="CBM20">
    <property type="family name" value="Carbohydrate-Binding Module Family 20"/>
</dbReference>
<dbReference type="PaxDb" id="5141-EFNCRP00000008572"/>
<dbReference type="EnsemblFungi" id="EAA34371">
    <property type="protein sequence ID" value="EAA34371"/>
    <property type="gene ID" value="NCU08746"/>
</dbReference>
<dbReference type="GeneID" id="3879715"/>
<dbReference type="KEGG" id="ncr:NCU08746"/>
<dbReference type="VEuPathDB" id="FungiDB:NCU08746"/>
<dbReference type="HOGENOM" id="CLU_055681_0_0_1"/>
<dbReference type="InParanoid" id="Q7SCE9"/>
<dbReference type="OrthoDB" id="550577at2759"/>
<dbReference type="BioCyc" id="MetaCyc:MONOMER-20054"/>
<dbReference type="BRENDA" id="1.14.99.55">
    <property type="organism ID" value="3627"/>
</dbReference>
<dbReference type="Proteomes" id="UP000001805">
    <property type="component" value="Chromosome 6, Linkage Group II"/>
</dbReference>
<dbReference type="GO" id="GO:0005576">
    <property type="term" value="C:extracellular region"/>
    <property type="evidence" value="ECO:0007669"/>
    <property type="project" value="UniProtKB-SubCell"/>
</dbReference>
<dbReference type="GO" id="GO:0016020">
    <property type="term" value="C:membrane"/>
    <property type="evidence" value="ECO:0000318"/>
    <property type="project" value="GO_Central"/>
</dbReference>
<dbReference type="GO" id="GO:0046872">
    <property type="term" value="F:metal ion binding"/>
    <property type="evidence" value="ECO:0007669"/>
    <property type="project" value="UniProtKB-KW"/>
</dbReference>
<dbReference type="GO" id="GO:0016491">
    <property type="term" value="F:oxidoreductase activity"/>
    <property type="evidence" value="ECO:0007669"/>
    <property type="project" value="UniProtKB-KW"/>
</dbReference>
<dbReference type="GO" id="GO:2001070">
    <property type="term" value="F:starch binding"/>
    <property type="evidence" value="ECO:0007669"/>
    <property type="project" value="InterPro"/>
</dbReference>
<dbReference type="GO" id="GO:0000272">
    <property type="term" value="P:polysaccharide catabolic process"/>
    <property type="evidence" value="ECO:0007669"/>
    <property type="project" value="UniProtKB-KW"/>
</dbReference>
<dbReference type="CDD" id="cd21137">
    <property type="entry name" value="AA13_LPMO-like"/>
    <property type="match status" value="1"/>
</dbReference>
<dbReference type="CDD" id="cd05811">
    <property type="entry name" value="CBM20_glucoamylase"/>
    <property type="match status" value="1"/>
</dbReference>
<dbReference type="FunFam" id="2.60.40.10:FF:000552">
    <property type="entry name" value="Related to glucoamylase"/>
    <property type="match status" value="1"/>
</dbReference>
<dbReference type="Gene3D" id="2.60.40.10">
    <property type="entry name" value="Immunoglobulins"/>
    <property type="match status" value="1"/>
</dbReference>
<dbReference type="InterPro" id="IPR013784">
    <property type="entry name" value="Carb-bd-like_fold"/>
</dbReference>
<dbReference type="InterPro" id="IPR002044">
    <property type="entry name" value="CBM20"/>
</dbReference>
<dbReference type="InterPro" id="IPR034836">
    <property type="entry name" value="CBM20_glucoamylase"/>
</dbReference>
<dbReference type="InterPro" id="IPR004302">
    <property type="entry name" value="Cellulose/chitin-bd_N"/>
</dbReference>
<dbReference type="InterPro" id="IPR013783">
    <property type="entry name" value="Ig-like_fold"/>
</dbReference>
<dbReference type="InterPro" id="IPR052282">
    <property type="entry name" value="Starch-active_LPMO"/>
</dbReference>
<dbReference type="PANTHER" id="PTHR36575">
    <property type="entry name" value="BINDING PROTEIN, PUTATIVE (AFU_ORTHOLOGUE AFUA_1G14430)-RELATED"/>
    <property type="match status" value="1"/>
</dbReference>
<dbReference type="PANTHER" id="PTHR36575:SF2">
    <property type="entry name" value="CHITIN-BINDING TYPE-4 DOMAIN-CONTAINING PROTEIN-RELATED"/>
    <property type="match status" value="1"/>
</dbReference>
<dbReference type="Pfam" id="PF00686">
    <property type="entry name" value="CBM_20"/>
    <property type="match status" value="1"/>
</dbReference>
<dbReference type="Pfam" id="PF03067">
    <property type="entry name" value="LPMO_10"/>
    <property type="match status" value="1"/>
</dbReference>
<dbReference type="SMART" id="SM01065">
    <property type="entry name" value="CBM_2"/>
    <property type="match status" value="1"/>
</dbReference>
<dbReference type="SUPFAM" id="SSF49452">
    <property type="entry name" value="Starch-binding domain-like"/>
    <property type="match status" value="1"/>
</dbReference>
<dbReference type="PROSITE" id="PS51166">
    <property type="entry name" value="CBM20"/>
    <property type="match status" value="1"/>
</dbReference>
<comment type="function">
    <text evidence="5 7">Starch-active lytic polysaccharide monooxygenase that oxidizes the C1 position of starch substrates, but not in cellulose or chitin (PubMed:25201969). Catalysis by LPMOs requires the reduction of the active-site copper from Cu(II) to Cu(I) by a reducing agent and H(2)O(2) or O(2) as a cosubstrate (Probable).</text>
</comment>
<comment type="catalytic activity">
    <reaction evidence="5">
        <text>starch + reduced acceptor + O2 = D-glucono-1,5-lactone-terminated malto-oligosaccharides + short-chain malto-oligosaccharides + acceptor + H2O.</text>
        <dbReference type="EC" id="1.14.99.55"/>
    </reaction>
</comment>
<comment type="cofactor">
    <cofactor evidence="5">
        <name>Cu(2+)</name>
        <dbReference type="ChEBI" id="CHEBI:29036"/>
    </cofactor>
    <text evidence="5">Binds 1 copper ion per subunit.</text>
</comment>
<comment type="subcellular location">
    <subcellularLocation>
        <location evidence="7">Secreted</location>
    </subcellularLocation>
</comment>
<comment type="domain">
    <text evidence="8">The CBM20 domain is involved in binding to starch.</text>
</comment>
<comment type="biotechnology">
    <text evidence="5">Starch-active PMOs provide an expanded perspective on studies of starch metabolism and may have potential in the food and starch-based biofuel industries.</text>
</comment>
<comment type="similarity">
    <text evidence="7">Belongs to the polysaccharide monooxygenase AA13 family.</text>
</comment>
<reference key="1">
    <citation type="journal article" date="2003" name="Nature">
        <title>The genome sequence of the filamentous fungus Neurospora crassa.</title>
        <authorList>
            <person name="Galagan J.E."/>
            <person name="Calvo S.E."/>
            <person name="Borkovich K.A."/>
            <person name="Selker E.U."/>
            <person name="Read N.D."/>
            <person name="Jaffe D.B."/>
            <person name="FitzHugh W."/>
            <person name="Ma L.-J."/>
            <person name="Smirnov S."/>
            <person name="Purcell S."/>
            <person name="Rehman B."/>
            <person name="Elkins T."/>
            <person name="Engels R."/>
            <person name="Wang S."/>
            <person name="Nielsen C.B."/>
            <person name="Butler J."/>
            <person name="Endrizzi M."/>
            <person name="Qui D."/>
            <person name="Ianakiev P."/>
            <person name="Bell-Pedersen D."/>
            <person name="Nelson M.A."/>
            <person name="Werner-Washburne M."/>
            <person name="Selitrennikoff C.P."/>
            <person name="Kinsey J.A."/>
            <person name="Braun E.L."/>
            <person name="Zelter A."/>
            <person name="Schulte U."/>
            <person name="Kothe G.O."/>
            <person name="Jedd G."/>
            <person name="Mewes H.-W."/>
            <person name="Staben C."/>
            <person name="Marcotte E."/>
            <person name="Greenberg D."/>
            <person name="Roy A."/>
            <person name="Foley K."/>
            <person name="Naylor J."/>
            <person name="Stange-Thomann N."/>
            <person name="Barrett R."/>
            <person name="Gnerre S."/>
            <person name="Kamal M."/>
            <person name="Kamvysselis M."/>
            <person name="Mauceli E.W."/>
            <person name="Bielke C."/>
            <person name="Rudd S."/>
            <person name="Frishman D."/>
            <person name="Krystofova S."/>
            <person name="Rasmussen C."/>
            <person name="Metzenberg R.L."/>
            <person name="Perkins D.D."/>
            <person name="Kroken S."/>
            <person name="Cogoni C."/>
            <person name="Macino G."/>
            <person name="Catcheside D.E.A."/>
            <person name="Li W."/>
            <person name="Pratt R.J."/>
            <person name="Osmani S.A."/>
            <person name="DeSouza C.P.C."/>
            <person name="Glass N.L."/>
            <person name="Orbach M.J."/>
            <person name="Berglund J.A."/>
            <person name="Voelker R."/>
            <person name="Yarden O."/>
            <person name="Plamann M."/>
            <person name="Seiler S."/>
            <person name="Dunlap J.C."/>
            <person name="Radford A."/>
            <person name="Aramayo R."/>
            <person name="Natvig D.O."/>
            <person name="Alex L.A."/>
            <person name="Mannhaupt G."/>
            <person name="Ebbole D.J."/>
            <person name="Freitag M."/>
            <person name="Paulsen I."/>
            <person name="Sachs M.S."/>
            <person name="Lander E.S."/>
            <person name="Nusbaum C."/>
            <person name="Birren B.W."/>
        </authorList>
    </citation>
    <scope>NUCLEOTIDE SEQUENCE [LARGE SCALE GENOMIC DNA]</scope>
    <source>
        <strain>ATCC 24698 / 74-OR23-1A / CBS 708.71 / DSM 1257 / FGSC 987</strain>
    </source>
</reference>
<reference key="2">
    <citation type="journal article" date="2014" name="Proc. Natl. Acad. Sci. U.S.A.">
        <title>A family of starch-active polysaccharide monooxygenases.</title>
        <authorList>
            <person name="Vu V.V."/>
            <person name="Beeson W.T."/>
            <person name="Span E.A."/>
            <person name="Farquhar E.R."/>
            <person name="Marletta M.A."/>
        </authorList>
    </citation>
    <scope>PROTEIN SEQUENCE OF 19-30; 60-71; 117-232 AND 344-385</scope>
    <scope>METHYLATION AT HIS-19</scope>
    <scope>FUNCTION</scope>
    <scope>DOMAIN</scope>
    <scope>CATALYTIC ACTIVITY</scope>
    <scope>COFACTOR</scope>
    <scope>BIOTECHNOLOGY</scope>
</reference>
<sequence length="385" mass="41004">MKFSIISVALASAITVDAHGYLTIPFSRTRLGAEAGLDTCPECSILEPVTAWPNVTEAKVGRSGPCGYNARVSIDYNQPATNWGNSPVVTYTAGDTVDVQWCVDHNGDHGGMFSYRICQDQELVNKFLTPGYLPTEAEKQAAEDCFEKGTLPCTDVNGQSCDFSPDCQQGQACWRNDWFTCNAFQADSRRGCQGVDNAALGSCFTTIAGGYTVTKKIKIPNYISGHTLLSFRWNSFQTAQVYLSCADIAIVGDSASTTKVSATATTLVTSSKTASASCTPAATVAVTFNHLASTSYGESIKIVGSISQLGSWSASSGVALSASQYTTSNPLWTATVSLPAGTKFEYKFVKVSSEGSAVTWESDPNRSYTVPQSCAESVAVESSWK</sequence>
<proteinExistence type="evidence at protein level"/>
<name>AA13_NEUCR</name>
<gene>
    <name type="ORF">NCU08746</name>
</gene>
<evidence type="ECO:0000250" key="1">
    <source>
        <dbReference type="UniProtKB" id="Q2U8Y3"/>
    </source>
</evidence>
<evidence type="ECO:0000255" key="2"/>
<evidence type="ECO:0000255" key="3">
    <source>
        <dbReference type="PROSITE-ProRule" id="PRU00498"/>
    </source>
</evidence>
<evidence type="ECO:0000255" key="4">
    <source>
        <dbReference type="PROSITE-ProRule" id="PRU00594"/>
    </source>
</evidence>
<evidence type="ECO:0000269" key="5">
    <source>
    </source>
</evidence>
<evidence type="ECO:0000303" key="6">
    <source>
    </source>
</evidence>
<evidence type="ECO:0000305" key="7"/>
<evidence type="ECO:0000305" key="8">
    <source>
    </source>
</evidence>
<keyword id="KW-0119">Carbohydrate metabolism</keyword>
<keyword id="KW-0186">Copper</keyword>
<keyword id="KW-0903">Direct protein sequencing</keyword>
<keyword id="KW-1015">Disulfide bond</keyword>
<keyword id="KW-0325">Glycoprotein</keyword>
<keyword id="KW-0479">Metal-binding</keyword>
<keyword id="KW-0488">Methylation</keyword>
<keyword id="KW-0560">Oxidoreductase</keyword>
<keyword id="KW-0624">Polysaccharide degradation</keyword>
<keyword id="KW-1185">Reference proteome</keyword>
<keyword id="KW-0964">Secreted</keyword>
<keyword id="KW-0732">Signal</keyword>
<accession>Q7SCE9</accession>